<dbReference type="EC" id="3.6.5.3" evidence="2"/>
<dbReference type="EMBL" id="BA000030">
    <property type="protein sequence ID" value="BAC72632.1"/>
    <property type="molecule type" value="Genomic_DNA"/>
</dbReference>
<dbReference type="SMR" id="Q82DQ0"/>
<dbReference type="GeneID" id="41542004"/>
<dbReference type="KEGG" id="sma:SAVERM_4920"/>
<dbReference type="eggNOG" id="COG0050">
    <property type="taxonomic scope" value="Bacteria"/>
</dbReference>
<dbReference type="HOGENOM" id="CLU_007265_0_1_11"/>
<dbReference type="OrthoDB" id="9803139at2"/>
<dbReference type="Proteomes" id="UP000000428">
    <property type="component" value="Chromosome"/>
</dbReference>
<dbReference type="GO" id="GO:0005829">
    <property type="term" value="C:cytosol"/>
    <property type="evidence" value="ECO:0007669"/>
    <property type="project" value="TreeGrafter"/>
</dbReference>
<dbReference type="GO" id="GO:0005525">
    <property type="term" value="F:GTP binding"/>
    <property type="evidence" value="ECO:0007669"/>
    <property type="project" value="UniProtKB-UniRule"/>
</dbReference>
<dbReference type="GO" id="GO:0003924">
    <property type="term" value="F:GTPase activity"/>
    <property type="evidence" value="ECO:0007669"/>
    <property type="project" value="InterPro"/>
</dbReference>
<dbReference type="GO" id="GO:0003746">
    <property type="term" value="F:translation elongation factor activity"/>
    <property type="evidence" value="ECO:0007669"/>
    <property type="project" value="UniProtKB-UniRule"/>
</dbReference>
<dbReference type="CDD" id="cd01884">
    <property type="entry name" value="EF_Tu"/>
    <property type="match status" value="1"/>
</dbReference>
<dbReference type="CDD" id="cd03697">
    <property type="entry name" value="EFTU_II"/>
    <property type="match status" value="1"/>
</dbReference>
<dbReference type="CDD" id="cd03707">
    <property type="entry name" value="EFTU_III"/>
    <property type="match status" value="1"/>
</dbReference>
<dbReference type="FunFam" id="2.40.30.10:FF:000001">
    <property type="entry name" value="Elongation factor Tu"/>
    <property type="match status" value="1"/>
</dbReference>
<dbReference type="FunFam" id="3.40.50.300:FF:000003">
    <property type="entry name" value="Elongation factor Tu"/>
    <property type="match status" value="1"/>
</dbReference>
<dbReference type="Gene3D" id="3.40.50.300">
    <property type="entry name" value="P-loop containing nucleotide triphosphate hydrolases"/>
    <property type="match status" value="1"/>
</dbReference>
<dbReference type="Gene3D" id="2.40.30.10">
    <property type="entry name" value="Translation factors"/>
    <property type="match status" value="2"/>
</dbReference>
<dbReference type="HAMAP" id="MF_00118_B">
    <property type="entry name" value="EF_Tu_B"/>
    <property type="match status" value="1"/>
</dbReference>
<dbReference type="InterPro" id="IPR041709">
    <property type="entry name" value="EF-Tu_GTP-bd"/>
</dbReference>
<dbReference type="InterPro" id="IPR050055">
    <property type="entry name" value="EF-Tu_GTPase"/>
</dbReference>
<dbReference type="InterPro" id="IPR004161">
    <property type="entry name" value="EFTu-like_2"/>
</dbReference>
<dbReference type="InterPro" id="IPR033720">
    <property type="entry name" value="EFTU_2"/>
</dbReference>
<dbReference type="InterPro" id="IPR031157">
    <property type="entry name" value="G_TR_CS"/>
</dbReference>
<dbReference type="InterPro" id="IPR027417">
    <property type="entry name" value="P-loop_NTPase"/>
</dbReference>
<dbReference type="InterPro" id="IPR005225">
    <property type="entry name" value="Small_GTP-bd"/>
</dbReference>
<dbReference type="InterPro" id="IPR000795">
    <property type="entry name" value="T_Tr_GTP-bd_dom"/>
</dbReference>
<dbReference type="InterPro" id="IPR009000">
    <property type="entry name" value="Transl_B-barrel_sf"/>
</dbReference>
<dbReference type="InterPro" id="IPR009001">
    <property type="entry name" value="Transl_elong_EF1A/Init_IF2_C"/>
</dbReference>
<dbReference type="InterPro" id="IPR004541">
    <property type="entry name" value="Transl_elong_EFTu/EF1A_bac/org"/>
</dbReference>
<dbReference type="InterPro" id="IPR004160">
    <property type="entry name" value="Transl_elong_EFTu/EF1A_C"/>
</dbReference>
<dbReference type="NCBIfam" id="TIGR00485">
    <property type="entry name" value="EF-Tu"/>
    <property type="match status" value="1"/>
</dbReference>
<dbReference type="NCBIfam" id="NF000766">
    <property type="entry name" value="PRK00049.1"/>
    <property type="match status" value="1"/>
</dbReference>
<dbReference type="NCBIfam" id="NF009372">
    <property type="entry name" value="PRK12735.1"/>
    <property type="match status" value="1"/>
</dbReference>
<dbReference type="NCBIfam" id="NF009373">
    <property type="entry name" value="PRK12736.1"/>
    <property type="match status" value="1"/>
</dbReference>
<dbReference type="NCBIfam" id="TIGR00231">
    <property type="entry name" value="small_GTP"/>
    <property type="match status" value="1"/>
</dbReference>
<dbReference type="PANTHER" id="PTHR43721:SF22">
    <property type="entry name" value="ELONGATION FACTOR TU, MITOCHONDRIAL"/>
    <property type="match status" value="1"/>
</dbReference>
<dbReference type="PANTHER" id="PTHR43721">
    <property type="entry name" value="ELONGATION FACTOR TU-RELATED"/>
    <property type="match status" value="1"/>
</dbReference>
<dbReference type="Pfam" id="PF00009">
    <property type="entry name" value="GTP_EFTU"/>
    <property type="match status" value="1"/>
</dbReference>
<dbReference type="Pfam" id="PF03144">
    <property type="entry name" value="GTP_EFTU_D2"/>
    <property type="match status" value="1"/>
</dbReference>
<dbReference type="Pfam" id="PF03143">
    <property type="entry name" value="GTP_EFTU_D3"/>
    <property type="match status" value="1"/>
</dbReference>
<dbReference type="PRINTS" id="PR00315">
    <property type="entry name" value="ELONGATNFCT"/>
</dbReference>
<dbReference type="SUPFAM" id="SSF50465">
    <property type="entry name" value="EF-Tu/eEF-1alpha/eIF2-gamma C-terminal domain"/>
    <property type="match status" value="1"/>
</dbReference>
<dbReference type="SUPFAM" id="SSF52540">
    <property type="entry name" value="P-loop containing nucleoside triphosphate hydrolases"/>
    <property type="match status" value="1"/>
</dbReference>
<dbReference type="SUPFAM" id="SSF50447">
    <property type="entry name" value="Translation proteins"/>
    <property type="match status" value="1"/>
</dbReference>
<dbReference type="PROSITE" id="PS00301">
    <property type="entry name" value="G_TR_1"/>
    <property type="match status" value="1"/>
</dbReference>
<dbReference type="PROSITE" id="PS51722">
    <property type="entry name" value="G_TR_2"/>
    <property type="match status" value="1"/>
</dbReference>
<sequence length="397" mass="43826">MAKAKFERTKPHVNIGTIGHIDHGKTTLTAAITKVLHDAYPDLNEASAFDQIDKAPEERQRGITISIAHVEYQTETRHYAHVDCPGHADYIKNMITGAAQMDGAILVVAATDGPMPQTKEHVLLARQVGVPYIVVALNKADMVDDEEILELVELEVRELLSEYEFPGDDLPVVKVSALKALEGDKEWGQSVLDLMKAVDENIPQPERDVDKPFLMPIEDVFTITGRGTVVTGRIERGVLKVNETVDIVGIKTEKTTTTVTGIEMFRKLLDEGQAGENVGLLLRGIKREDVERGQVIIKPGSVTPHTEFEAQAYILSKDEGGRHTPFFNNYRPQFYFRTTDVTGVVTLPEGTEMVMPGDNTEMTVELIQPVAMEEGLKFAIREGGRTVGAGQVTKINK</sequence>
<proteinExistence type="inferred from homology"/>
<name>EFTU1_STRAW</name>
<keyword id="KW-0963">Cytoplasm</keyword>
<keyword id="KW-0251">Elongation factor</keyword>
<keyword id="KW-0342">GTP-binding</keyword>
<keyword id="KW-0378">Hydrolase</keyword>
<keyword id="KW-0460">Magnesium</keyword>
<keyword id="KW-0479">Metal-binding</keyword>
<keyword id="KW-0547">Nucleotide-binding</keyword>
<keyword id="KW-0648">Protein biosynthesis</keyword>
<keyword id="KW-1185">Reference proteome</keyword>
<feature type="chain" id="PRO_0000337557" description="Elongation factor Tu 1">
    <location>
        <begin position="1"/>
        <end position="397"/>
    </location>
</feature>
<feature type="domain" description="tr-type G">
    <location>
        <begin position="10"/>
        <end position="206"/>
    </location>
</feature>
<feature type="region of interest" description="G1" evidence="1">
    <location>
        <begin position="19"/>
        <end position="26"/>
    </location>
</feature>
<feature type="region of interest" description="G2" evidence="1">
    <location>
        <begin position="62"/>
        <end position="66"/>
    </location>
</feature>
<feature type="region of interest" description="G3" evidence="1">
    <location>
        <begin position="83"/>
        <end position="86"/>
    </location>
</feature>
<feature type="region of interest" description="G4" evidence="1">
    <location>
        <begin position="138"/>
        <end position="141"/>
    </location>
</feature>
<feature type="region of interest" description="G5" evidence="1">
    <location>
        <begin position="176"/>
        <end position="178"/>
    </location>
</feature>
<feature type="binding site" evidence="2">
    <location>
        <begin position="19"/>
        <end position="26"/>
    </location>
    <ligand>
        <name>GTP</name>
        <dbReference type="ChEBI" id="CHEBI:37565"/>
    </ligand>
</feature>
<feature type="binding site" evidence="2">
    <location>
        <position position="26"/>
    </location>
    <ligand>
        <name>Mg(2+)</name>
        <dbReference type="ChEBI" id="CHEBI:18420"/>
    </ligand>
</feature>
<feature type="binding site" evidence="2">
    <location>
        <begin position="83"/>
        <end position="87"/>
    </location>
    <ligand>
        <name>GTP</name>
        <dbReference type="ChEBI" id="CHEBI:37565"/>
    </ligand>
</feature>
<feature type="binding site" evidence="2">
    <location>
        <begin position="138"/>
        <end position="141"/>
    </location>
    <ligand>
        <name>GTP</name>
        <dbReference type="ChEBI" id="CHEBI:37565"/>
    </ligand>
</feature>
<accession>Q82DQ0</accession>
<gene>
    <name evidence="2" type="primary">tuf1</name>
    <name type="synonym">tufA1</name>
    <name type="ordered locus">SAV_4920</name>
</gene>
<organism>
    <name type="scientific">Streptomyces avermitilis (strain ATCC 31267 / DSM 46492 / JCM 5070 / NBRC 14893 / NCIMB 12804 / NRRL 8165 / MA-4680)</name>
    <dbReference type="NCBI Taxonomy" id="227882"/>
    <lineage>
        <taxon>Bacteria</taxon>
        <taxon>Bacillati</taxon>
        <taxon>Actinomycetota</taxon>
        <taxon>Actinomycetes</taxon>
        <taxon>Kitasatosporales</taxon>
        <taxon>Streptomycetaceae</taxon>
        <taxon>Streptomyces</taxon>
    </lineage>
</organism>
<reference key="1">
    <citation type="journal article" date="2001" name="Proc. Natl. Acad. Sci. U.S.A.">
        <title>Genome sequence of an industrial microorganism Streptomyces avermitilis: deducing the ability of producing secondary metabolites.</title>
        <authorList>
            <person name="Omura S."/>
            <person name="Ikeda H."/>
            <person name="Ishikawa J."/>
            <person name="Hanamoto A."/>
            <person name="Takahashi C."/>
            <person name="Shinose M."/>
            <person name="Takahashi Y."/>
            <person name="Horikawa H."/>
            <person name="Nakazawa H."/>
            <person name="Osonoe T."/>
            <person name="Kikuchi H."/>
            <person name="Shiba T."/>
            <person name="Sakaki Y."/>
            <person name="Hattori M."/>
        </authorList>
    </citation>
    <scope>NUCLEOTIDE SEQUENCE [LARGE SCALE GENOMIC DNA]</scope>
    <source>
        <strain>ATCC 31267 / DSM 46492 / JCM 5070 / NBRC 14893 / NCIMB 12804 / NRRL 8165 / MA-4680</strain>
    </source>
</reference>
<reference key="2">
    <citation type="journal article" date="2003" name="Nat. Biotechnol.">
        <title>Complete genome sequence and comparative analysis of the industrial microorganism Streptomyces avermitilis.</title>
        <authorList>
            <person name="Ikeda H."/>
            <person name="Ishikawa J."/>
            <person name="Hanamoto A."/>
            <person name="Shinose M."/>
            <person name="Kikuchi H."/>
            <person name="Shiba T."/>
            <person name="Sakaki Y."/>
            <person name="Hattori M."/>
            <person name="Omura S."/>
        </authorList>
    </citation>
    <scope>NUCLEOTIDE SEQUENCE [LARGE SCALE GENOMIC DNA]</scope>
    <source>
        <strain>ATCC 31267 / DSM 46492 / JCM 5070 / NBRC 14893 / NCIMB 12804 / NRRL 8165 / MA-4680</strain>
    </source>
</reference>
<comment type="function">
    <text evidence="2">GTP hydrolase that promotes the GTP-dependent binding of aminoacyl-tRNA to the A-site of ribosomes during protein biosynthesis.</text>
</comment>
<comment type="catalytic activity">
    <reaction evidence="2">
        <text>GTP + H2O = GDP + phosphate + H(+)</text>
        <dbReference type="Rhea" id="RHEA:19669"/>
        <dbReference type="ChEBI" id="CHEBI:15377"/>
        <dbReference type="ChEBI" id="CHEBI:15378"/>
        <dbReference type="ChEBI" id="CHEBI:37565"/>
        <dbReference type="ChEBI" id="CHEBI:43474"/>
        <dbReference type="ChEBI" id="CHEBI:58189"/>
        <dbReference type="EC" id="3.6.5.3"/>
    </reaction>
    <physiologicalReaction direction="left-to-right" evidence="2">
        <dbReference type="Rhea" id="RHEA:19670"/>
    </physiologicalReaction>
</comment>
<comment type="subunit">
    <text evidence="2">Monomer.</text>
</comment>
<comment type="subcellular location">
    <subcellularLocation>
        <location evidence="2">Cytoplasm</location>
    </subcellularLocation>
</comment>
<comment type="similarity">
    <text evidence="2">Belongs to the TRAFAC class translation factor GTPase superfamily. Classic translation factor GTPase family. EF-Tu/EF-1A subfamily.</text>
</comment>
<evidence type="ECO:0000250" key="1"/>
<evidence type="ECO:0000255" key="2">
    <source>
        <dbReference type="HAMAP-Rule" id="MF_00118"/>
    </source>
</evidence>
<protein>
    <recommendedName>
        <fullName evidence="2">Elongation factor Tu 1</fullName>
        <shortName evidence="2">EF-Tu 1</shortName>
        <ecNumber evidence="2">3.6.5.3</ecNumber>
    </recommendedName>
</protein>